<name>NU4LM_DICCI</name>
<gene>
    <name type="primary">nad4L</name>
</gene>
<proteinExistence type="inferred from homology"/>
<evidence type="ECO:0000250" key="1"/>
<evidence type="ECO:0000255" key="2"/>
<evidence type="ECO:0000305" key="3"/>
<comment type="function">
    <text evidence="1">Core subunit of the mitochondrial membrane respiratory chain NADH dehydrogenase (Complex I) that is believed to belong to the minimal assembly required for catalysis. Complex I functions in the transfer of electrons from NADH to the respiratory chain. The immediate electron acceptor for the enzyme is believed to be ubiquinone (By similarity).</text>
</comment>
<comment type="catalytic activity">
    <reaction>
        <text>a ubiquinone + NADH + 5 H(+)(in) = a ubiquinol + NAD(+) + 4 H(+)(out)</text>
        <dbReference type="Rhea" id="RHEA:29091"/>
        <dbReference type="Rhea" id="RHEA-COMP:9565"/>
        <dbReference type="Rhea" id="RHEA-COMP:9566"/>
        <dbReference type="ChEBI" id="CHEBI:15378"/>
        <dbReference type="ChEBI" id="CHEBI:16389"/>
        <dbReference type="ChEBI" id="CHEBI:17976"/>
        <dbReference type="ChEBI" id="CHEBI:57540"/>
        <dbReference type="ChEBI" id="CHEBI:57945"/>
        <dbReference type="EC" id="7.1.1.2"/>
    </reaction>
</comment>
<comment type="subcellular location">
    <subcellularLocation>
        <location evidence="1">Mitochondrion membrane</location>
        <topology evidence="1">Multi-pass membrane protein</topology>
    </subcellularLocation>
</comment>
<comment type="similarity">
    <text evidence="3">Belongs to the complex I subunit 4L family.</text>
</comment>
<sequence>MNLIDLILIAIYVIGISGLIFNKNNIINILIISELNLGTLGMLFVLASVELNDILGELSGLYILTFTAAESAIGLAIVVILYSKTGIINIRNLNKLKG</sequence>
<geneLocation type="mitochondrion"/>
<keyword id="KW-0249">Electron transport</keyword>
<keyword id="KW-0472">Membrane</keyword>
<keyword id="KW-0496">Mitochondrion</keyword>
<keyword id="KW-0520">NAD</keyword>
<keyword id="KW-0679">Respiratory chain</keyword>
<keyword id="KW-1278">Translocase</keyword>
<keyword id="KW-0812">Transmembrane</keyword>
<keyword id="KW-1133">Transmembrane helix</keyword>
<keyword id="KW-0813">Transport</keyword>
<keyword id="KW-0830">Ubiquinone</keyword>
<feature type="chain" id="PRO_0000312395" description="NADH-ubiquinone oxidoreductase chain 4L">
    <location>
        <begin position="1"/>
        <end position="98"/>
    </location>
</feature>
<feature type="transmembrane region" description="Helical" evidence="2">
    <location>
        <begin position="1"/>
        <end position="21"/>
    </location>
</feature>
<feature type="transmembrane region" description="Helical" evidence="2">
    <location>
        <begin position="26"/>
        <end position="46"/>
    </location>
</feature>
<feature type="transmembrane region" description="Helical" evidence="2">
    <location>
        <begin position="61"/>
        <end position="81"/>
    </location>
</feature>
<accession>P0C5X9</accession>
<accession>B2VQ42</accession>
<protein>
    <recommendedName>
        <fullName>NADH-ubiquinone oxidoreductase chain 4L</fullName>
        <ecNumber>7.1.1.2</ecNumber>
    </recommendedName>
    <alternativeName>
        <fullName>NADH dehydrogenase subunit 4L</fullName>
    </alternativeName>
</protein>
<organism>
    <name type="scientific">Dictyostelium citrinum</name>
    <name type="common">Slime mold</name>
    <dbReference type="NCBI Taxonomy" id="361072"/>
    <lineage>
        <taxon>Eukaryota</taxon>
        <taxon>Amoebozoa</taxon>
        <taxon>Evosea</taxon>
        <taxon>Eumycetozoa</taxon>
        <taxon>Dictyostelia</taxon>
        <taxon>Dictyosteliales</taxon>
        <taxon>Dictyosteliaceae</taxon>
        <taxon>Dictyostelium</taxon>
    </lineage>
</organism>
<dbReference type="EC" id="7.1.1.2"/>
<dbReference type="EMBL" id="DQ336395">
    <property type="protein sequence ID" value="ACD12710.1"/>
    <property type="molecule type" value="Genomic_DNA"/>
</dbReference>
<dbReference type="RefSeq" id="YP_003579827.1">
    <property type="nucleotide sequence ID" value="NC_007787.2"/>
</dbReference>
<dbReference type="SMR" id="P0C5X9"/>
<dbReference type="GeneID" id="9086860"/>
<dbReference type="GO" id="GO:0031966">
    <property type="term" value="C:mitochondrial membrane"/>
    <property type="evidence" value="ECO:0007669"/>
    <property type="project" value="UniProtKB-SubCell"/>
</dbReference>
<dbReference type="GO" id="GO:0030964">
    <property type="term" value="C:NADH dehydrogenase complex"/>
    <property type="evidence" value="ECO:0007669"/>
    <property type="project" value="TreeGrafter"/>
</dbReference>
<dbReference type="GO" id="GO:0008137">
    <property type="term" value="F:NADH dehydrogenase (ubiquinone) activity"/>
    <property type="evidence" value="ECO:0007669"/>
    <property type="project" value="UniProtKB-EC"/>
</dbReference>
<dbReference type="GO" id="GO:0042773">
    <property type="term" value="P:ATP synthesis coupled electron transport"/>
    <property type="evidence" value="ECO:0007669"/>
    <property type="project" value="InterPro"/>
</dbReference>
<dbReference type="FunFam" id="1.10.287.3510:FF:000014">
    <property type="entry name" value="NADH-ubiquinone oxidoreductase chain 4L"/>
    <property type="match status" value="1"/>
</dbReference>
<dbReference type="Gene3D" id="1.10.287.3510">
    <property type="match status" value="1"/>
</dbReference>
<dbReference type="InterPro" id="IPR001133">
    <property type="entry name" value="NADH_UbQ_OxRdtase_chain4L/K"/>
</dbReference>
<dbReference type="InterPro" id="IPR039428">
    <property type="entry name" value="NUOK/Mnh_C1-like"/>
</dbReference>
<dbReference type="PANTHER" id="PTHR11434:SF16">
    <property type="entry name" value="NADH-UBIQUINONE OXIDOREDUCTASE CHAIN 4L"/>
    <property type="match status" value="1"/>
</dbReference>
<dbReference type="PANTHER" id="PTHR11434">
    <property type="entry name" value="NADH-UBIQUINONE OXIDOREDUCTASE SUBUNIT ND4L"/>
    <property type="match status" value="1"/>
</dbReference>
<dbReference type="Pfam" id="PF00420">
    <property type="entry name" value="Oxidored_q2"/>
    <property type="match status" value="1"/>
</dbReference>
<reference key="1">
    <citation type="journal article" date="2008" name="Mol. Biol. Evol.">
        <title>Mitochondrial genome evolution in the social amoebae.</title>
        <authorList>
            <person name="Heidel A.J."/>
            <person name="Gloeckner G."/>
        </authorList>
    </citation>
    <scope>NUCLEOTIDE SEQUENCE [LARGE SCALE GENOMIC DNA]</scope>
</reference>